<reference key="1">
    <citation type="journal article" date="2002" name="Lancet">
        <title>Genome and virulence determinants of high virulence community-acquired MRSA.</title>
        <authorList>
            <person name="Baba T."/>
            <person name="Takeuchi F."/>
            <person name="Kuroda M."/>
            <person name="Yuzawa H."/>
            <person name="Aoki K."/>
            <person name="Oguchi A."/>
            <person name="Nagai Y."/>
            <person name="Iwama N."/>
            <person name="Asano K."/>
            <person name="Naimi T."/>
            <person name="Kuroda H."/>
            <person name="Cui L."/>
            <person name="Yamamoto K."/>
            <person name="Hiramatsu K."/>
        </authorList>
    </citation>
    <scope>NUCLEOTIDE SEQUENCE [LARGE SCALE GENOMIC DNA]</scope>
    <source>
        <strain>MW2</strain>
    </source>
</reference>
<keyword id="KW-0004">4Fe-4S</keyword>
<keyword id="KW-0342">GTP-binding</keyword>
<keyword id="KW-0408">Iron</keyword>
<keyword id="KW-0411">Iron-sulfur</keyword>
<keyword id="KW-0456">Lyase</keyword>
<keyword id="KW-0479">Metal-binding</keyword>
<keyword id="KW-0501">Molybdenum cofactor biosynthesis</keyword>
<keyword id="KW-0547">Nucleotide-binding</keyword>
<keyword id="KW-0949">S-adenosyl-L-methionine</keyword>
<proteinExistence type="inferred from homology"/>
<dbReference type="EC" id="4.1.99.22" evidence="1"/>
<dbReference type="EMBL" id="BA000033">
    <property type="protein sequence ID" value="BAB96051.1"/>
    <property type="molecule type" value="Genomic_DNA"/>
</dbReference>
<dbReference type="RefSeq" id="WP_000230173.1">
    <property type="nucleotide sequence ID" value="NC_003923.1"/>
</dbReference>
<dbReference type="SMR" id="P65389"/>
<dbReference type="DrugBank" id="DB04447">
    <property type="generic name" value="1,4-Dithiothreitol"/>
</dbReference>
<dbReference type="KEGG" id="sam:MW2186"/>
<dbReference type="HOGENOM" id="CLU_009273_0_1_9"/>
<dbReference type="UniPathway" id="UPA00344"/>
<dbReference type="GO" id="GO:0051539">
    <property type="term" value="F:4 iron, 4 sulfur cluster binding"/>
    <property type="evidence" value="ECO:0007669"/>
    <property type="project" value="UniProtKB-UniRule"/>
</dbReference>
<dbReference type="GO" id="GO:0061799">
    <property type="term" value="F:cyclic pyranopterin monophosphate synthase activity"/>
    <property type="evidence" value="ECO:0007669"/>
    <property type="project" value="TreeGrafter"/>
</dbReference>
<dbReference type="GO" id="GO:0061798">
    <property type="term" value="F:GTP 3',8'-cyclase activity"/>
    <property type="evidence" value="ECO:0007669"/>
    <property type="project" value="UniProtKB-UniRule"/>
</dbReference>
<dbReference type="GO" id="GO:0005525">
    <property type="term" value="F:GTP binding"/>
    <property type="evidence" value="ECO:0007669"/>
    <property type="project" value="UniProtKB-UniRule"/>
</dbReference>
<dbReference type="GO" id="GO:0046872">
    <property type="term" value="F:metal ion binding"/>
    <property type="evidence" value="ECO:0007669"/>
    <property type="project" value="UniProtKB-KW"/>
</dbReference>
<dbReference type="GO" id="GO:1904047">
    <property type="term" value="F:S-adenosyl-L-methionine binding"/>
    <property type="evidence" value="ECO:0007669"/>
    <property type="project" value="UniProtKB-UniRule"/>
</dbReference>
<dbReference type="GO" id="GO:0006777">
    <property type="term" value="P:Mo-molybdopterin cofactor biosynthetic process"/>
    <property type="evidence" value="ECO:0007669"/>
    <property type="project" value="UniProtKB-UniRule"/>
</dbReference>
<dbReference type="CDD" id="cd01335">
    <property type="entry name" value="Radical_SAM"/>
    <property type="match status" value="1"/>
</dbReference>
<dbReference type="CDD" id="cd21117">
    <property type="entry name" value="Twitch_MoaA"/>
    <property type="match status" value="1"/>
</dbReference>
<dbReference type="Gene3D" id="3.20.20.70">
    <property type="entry name" value="Aldolase class I"/>
    <property type="match status" value="1"/>
</dbReference>
<dbReference type="HAMAP" id="MF_01225_B">
    <property type="entry name" value="MoaA_B"/>
    <property type="match status" value="1"/>
</dbReference>
<dbReference type="InterPro" id="IPR013785">
    <property type="entry name" value="Aldolase_TIM"/>
</dbReference>
<dbReference type="InterPro" id="IPR006638">
    <property type="entry name" value="Elp3/MiaA/NifB-like_rSAM"/>
</dbReference>
<dbReference type="InterPro" id="IPR013483">
    <property type="entry name" value="MoaA"/>
</dbReference>
<dbReference type="InterPro" id="IPR000385">
    <property type="entry name" value="MoaA_NifB_PqqE_Fe-S-bd_CS"/>
</dbReference>
<dbReference type="InterPro" id="IPR010505">
    <property type="entry name" value="MoaA_twitch"/>
</dbReference>
<dbReference type="InterPro" id="IPR050105">
    <property type="entry name" value="MoCo_biosynth_MoaA/MoaC"/>
</dbReference>
<dbReference type="InterPro" id="IPR007197">
    <property type="entry name" value="rSAM"/>
</dbReference>
<dbReference type="NCBIfam" id="TIGR02666">
    <property type="entry name" value="moaA"/>
    <property type="match status" value="1"/>
</dbReference>
<dbReference type="PANTHER" id="PTHR22960:SF0">
    <property type="entry name" value="MOLYBDENUM COFACTOR BIOSYNTHESIS PROTEIN 1"/>
    <property type="match status" value="1"/>
</dbReference>
<dbReference type="PANTHER" id="PTHR22960">
    <property type="entry name" value="MOLYBDOPTERIN COFACTOR SYNTHESIS PROTEIN A"/>
    <property type="match status" value="1"/>
</dbReference>
<dbReference type="Pfam" id="PF06463">
    <property type="entry name" value="Mob_synth_C"/>
    <property type="match status" value="1"/>
</dbReference>
<dbReference type="Pfam" id="PF04055">
    <property type="entry name" value="Radical_SAM"/>
    <property type="match status" value="1"/>
</dbReference>
<dbReference type="SFLD" id="SFLDF00276">
    <property type="entry name" value="cyclic_pyranopterin_phosphate"/>
    <property type="match status" value="1"/>
</dbReference>
<dbReference type="SFLD" id="SFLDG01216">
    <property type="entry name" value="thioether_bond_formation_requi"/>
    <property type="match status" value="1"/>
</dbReference>
<dbReference type="SMART" id="SM00729">
    <property type="entry name" value="Elp3"/>
    <property type="match status" value="1"/>
</dbReference>
<dbReference type="SUPFAM" id="SSF102114">
    <property type="entry name" value="Radical SAM enzymes"/>
    <property type="match status" value="1"/>
</dbReference>
<dbReference type="PROSITE" id="PS01305">
    <property type="entry name" value="MOAA_NIFB_PQQE"/>
    <property type="match status" value="1"/>
</dbReference>
<dbReference type="PROSITE" id="PS51918">
    <property type="entry name" value="RADICAL_SAM"/>
    <property type="match status" value="1"/>
</dbReference>
<gene>
    <name evidence="1" type="primary">moaA</name>
    <name type="ordered locus">MW2186</name>
</gene>
<protein>
    <recommendedName>
        <fullName evidence="1">GTP 3',8-cyclase</fullName>
        <ecNumber evidence="1">4.1.99.22</ecNumber>
    </recommendedName>
    <alternativeName>
        <fullName evidence="1">Molybdenum cofactor biosynthesis protein A</fullName>
    </alternativeName>
</protein>
<comment type="function">
    <text evidence="1">Catalyzes the cyclization of GTP to (8S)-3',8-cyclo-7,8-dihydroguanosine 5'-triphosphate.</text>
</comment>
<comment type="catalytic activity">
    <reaction evidence="1">
        <text>GTP + AH2 + S-adenosyl-L-methionine = (8S)-3',8-cyclo-7,8-dihydroguanosine 5'-triphosphate + 5'-deoxyadenosine + L-methionine + A + H(+)</text>
        <dbReference type="Rhea" id="RHEA:49576"/>
        <dbReference type="ChEBI" id="CHEBI:13193"/>
        <dbReference type="ChEBI" id="CHEBI:15378"/>
        <dbReference type="ChEBI" id="CHEBI:17319"/>
        <dbReference type="ChEBI" id="CHEBI:17499"/>
        <dbReference type="ChEBI" id="CHEBI:37565"/>
        <dbReference type="ChEBI" id="CHEBI:57844"/>
        <dbReference type="ChEBI" id="CHEBI:59789"/>
        <dbReference type="ChEBI" id="CHEBI:131766"/>
        <dbReference type="EC" id="4.1.99.22"/>
    </reaction>
</comment>
<comment type="cofactor">
    <cofactor evidence="1">
        <name>[4Fe-4S] cluster</name>
        <dbReference type="ChEBI" id="CHEBI:49883"/>
    </cofactor>
    <text evidence="1">Binds 2 [4Fe-4S] clusters. Binds 1 [4Fe-4S] cluster coordinated with 3 cysteines and an exchangeable S-adenosyl-L-methionine and 1 [4Fe-4S] cluster coordinated with 3 cysteines and the GTP-derived substrate.</text>
</comment>
<comment type="pathway">
    <text evidence="1">Cofactor biosynthesis; molybdopterin biosynthesis.</text>
</comment>
<comment type="subunit">
    <text evidence="1">Monomer and homodimer.</text>
</comment>
<comment type="similarity">
    <text evidence="1">Belongs to the radical SAM superfamily. MoaA family.</text>
</comment>
<organism>
    <name type="scientific">Staphylococcus aureus (strain MW2)</name>
    <dbReference type="NCBI Taxonomy" id="196620"/>
    <lineage>
        <taxon>Bacteria</taxon>
        <taxon>Bacillati</taxon>
        <taxon>Bacillota</taxon>
        <taxon>Bacilli</taxon>
        <taxon>Bacillales</taxon>
        <taxon>Staphylococcaceae</taxon>
        <taxon>Staphylococcus</taxon>
    </lineage>
</organism>
<evidence type="ECO:0000255" key="1">
    <source>
        <dbReference type="HAMAP-Rule" id="MF_01225"/>
    </source>
</evidence>
<evidence type="ECO:0000255" key="2">
    <source>
        <dbReference type="PROSITE-ProRule" id="PRU01266"/>
    </source>
</evidence>
<accession>P65389</accession>
<accession>Q99S04</accession>
<sequence>MVEQIKDKLGRPIRDLRLSVTDRCNFRCDYCMPKEVFGDDFVFLPKNELLTFDEMARIAKVYAELGVKKIRITGGEPLMRRDLDVLIAKLNQIDGIEDIGLTTNGLLLKKHGQKLYDAGLRRINVSLDAIDDTLFQSINNRNIKATTILEQIDYATSIGLNVKVNVVIQKGINDDQIIPMLEYFKDKHIEIRFIEFMDVGNDNGWDFSKVVTKDEMLTMIEQHFEIDPVEPKYFGEVAKYYRHKDNGVQFGLITSVSQSFCSTCTRARLSSDGKFYGCLFATVDGFNVKAFIRSGVTDEELKEQFKALWQIRDDRYSDERTAQTVANRQRKKINMNYIGG</sequence>
<feature type="chain" id="PRO_0000152996" description="GTP 3',8-cyclase">
    <location>
        <begin position="1"/>
        <end position="340"/>
    </location>
</feature>
<feature type="domain" description="Radical SAM core" evidence="2">
    <location>
        <begin position="8"/>
        <end position="227"/>
    </location>
</feature>
<feature type="binding site" evidence="1">
    <location>
        <position position="17"/>
    </location>
    <ligand>
        <name>GTP</name>
        <dbReference type="ChEBI" id="CHEBI:37565"/>
    </ligand>
</feature>
<feature type="binding site" evidence="1">
    <location>
        <position position="24"/>
    </location>
    <ligand>
        <name>[4Fe-4S] cluster</name>
        <dbReference type="ChEBI" id="CHEBI:49883"/>
        <label>1</label>
        <note>4Fe-4S-S-AdoMet</note>
    </ligand>
</feature>
<feature type="binding site" evidence="1">
    <location>
        <position position="28"/>
    </location>
    <ligand>
        <name>[4Fe-4S] cluster</name>
        <dbReference type="ChEBI" id="CHEBI:49883"/>
        <label>1</label>
        <note>4Fe-4S-S-AdoMet</note>
    </ligand>
</feature>
<feature type="binding site" evidence="1">
    <location>
        <position position="30"/>
    </location>
    <ligand>
        <name>S-adenosyl-L-methionine</name>
        <dbReference type="ChEBI" id="CHEBI:59789"/>
    </ligand>
</feature>
<feature type="binding site" evidence="1">
    <location>
        <position position="31"/>
    </location>
    <ligand>
        <name>[4Fe-4S] cluster</name>
        <dbReference type="ChEBI" id="CHEBI:49883"/>
        <label>1</label>
        <note>4Fe-4S-S-AdoMet</note>
    </ligand>
</feature>
<feature type="binding site" evidence="1">
    <location>
        <position position="71"/>
    </location>
    <ligand>
        <name>GTP</name>
        <dbReference type="ChEBI" id="CHEBI:37565"/>
    </ligand>
</feature>
<feature type="binding site" evidence="1">
    <location>
        <position position="75"/>
    </location>
    <ligand>
        <name>S-adenosyl-L-methionine</name>
        <dbReference type="ChEBI" id="CHEBI:59789"/>
    </ligand>
</feature>
<feature type="binding site" evidence="1">
    <location>
        <position position="102"/>
    </location>
    <ligand>
        <name>GTP</name>
        <dbReference type="ChEBI" id="CHEBI:37565"/>
    </ligand>
</feature>
<feature type="binding site" evidence="1">
    <location>
        <position position="126"/>
    </location>
    <ligand>
        <name>S-adenosyl-L-methionine</name>
        <dbReference type="ChEBI" id="CHEBI:59789"/>
    </ligand>
</feature>
<feature type="binding site" evidence="1">
    <location>
        <position position="163"/>
    </location>
    <ligand>
        <name>GTP</name>
        <dbReference type="ChEBI" id="CHEBI:37565"/>
    </ligand>
</feature>
<feature type="binding site" evidence="1">
    <location>
        <position position="197"/>
    </location>
    <ligand>
        <name>S-adenosyl-L-methionine</name>
        <dbReference type="ChEBI" id="CHEBI:59789"/>
    </ligand>
</feature>
<feature type="binding site" evidence="1">
    <location>
        <position position="261"/>
    </location>
    <ligand>
        <name>[4Fe-4S] cluster</name>
        <dbReference type="ChEBI" id="CHEBI:49883"/>
        <label>2</label>
        <note>4Fe-4S-substrate</note>
    </ligand>
</feature>
<feature type="binding site" evidence="1">
    <location>
        <position position="264"/>
    </location>
    <ligand>
        <name>[4Fe-4S] cluster</name>
        <dbReference type="ChEBI" id="CHEBI:49883"/>
        <label>2</label>
        <note>4Fe-4S-substrate</note>
    </ligand>
</feature>
<feature type="binding site" evidence="1">
    <location>
        <begin position="266"/>
        <end position="268"/>
    </location>
    <ligand>
        <name>GTP</name>
        <dbReference type="ChEBI" id="CHEBI:37565"/>
    </ligand>
</feature>
<feature type="binding site" evidence="1">
    <location>
        <position position="278"/>
    </location>
    <ligand>
        <name>[4Fe-4S] cluster</name>
        <dbReference type="ChEBI" id="CHEBI:49883"/>
        <label>2</label>
        <note>4Fe-4S-substrate</note>
    </ligand>
</feature>
<name>MOAA_STAAW</name>